<organism>
    <name type="scientific">Salmonella typhimurium (strain LT2 / SGSC1412 / ATCC 700720)</name>
    <dbReference type="NCBI Taxonomy" id="99287"/>
    <lineage>
        <taxon>Bacteria</taxon>
        <taxon>Pseudomonadati</taxon>
        <taxon>Pseudomonadota</taxon>
        <taxon>Gammaproteobacteria</taxon>
        <taxon>Enterobacterales</taxon>
        <taxon>Enterobacteriaceae</taxon>
        <taxon>Salmonella</taxon>
    </lineage>
</organism>
<evidence type="ECO:0000255" key="1">
    <source>
        <dbReference type="HAMAP-Rule" id="MF_01951"/>
    </source>
</evidence>
<protein>
    <recommendedName>
        <fullName evidence="1">L-ribulose-5-phosphate 3-epimerase UlaE</fullName>
        <ecNumber evidence="1">5.1.3.22</ecNumber>
    </recommendedName>
    <alternativeName>
        <fullName evidence="1">L-ascorbate utilization protein E</fullName>
    </alternativeName>
    <alternativeName>
        <fullName evidence="1">L-xylulose-5-phosphate 3-epimerase</fullName>
    </alternativeName>
</protein>
<accession>Q8ZK86</accession>
<gene>
    <name evidence="1" type="primary">ulaE</name>
    <name type="ordered locus">STM4387</name>
</gene>
<dbReference type="EC" id="5.1.3.22" evidence="1"/>
<dbReference type="EMBL" id="AE006468">
    <property type="protein sequence ID" value="AAL23207.1"/>
    <property type="molecule type" value="Genomic_DNA"/>
</dbReference>
<dbReference type="RefSeq" id="WP_000949525.1">
    <property type="nucleotide sequence ID" value="NC_003197.2"/>
</dbReference>
<dbReference type="SMR" id="Q8ZK86"/>
<dbReference type="STRING" id="99287.STM4387"/>
<dbReference type="PaxDb" id="99287-STM4387"/>
<dbReference type="KEGG" id="stm:STM4387"/>
<dbReference type="PATRIC" id="fig|99287.12.peg.4612"/>
<dbReference type="HOGENOM" id="CLU_082738_0_0_6"/>
<dbReference type="OMA" id="QAGMGHI"/>
<dbReference type="PhylomeDB" id="Q8ZK86"/>
<dbReference type="BioCyc" id="SENT99287:STM4387-MONOMER"/>
<dbReference type="UniPathway" id="UPA00263">
    <property type="reaction ID" value="UER00379"/>
</dbReference>
<dbReference type="Proteomes" id="UP000001014">
    <property type="component" value="Chromosome"/>
</dbReference>
<dbReference type="GO" id="GO:0016861">
    <property type="term" value="F:intramolecular oxidoreductase activity, interconverting aldoses and ketoses"/>
    <property type="evidence" value="ECO:0007669"/>
    <property type="project" value="InterPro"/>
</dbReference>
<dbReference type="GO" id="GO:0034015">
    <property type="term" value="F:L-ribulose-5-phosphate 3-epimerase activity"/>
    <property type="evidence" value="ECO:0000318"/>
    <property type="project" value="GO_Central"/>
</dbReference>
<dbReference type="GO" id="GO:0019854">
    <property type="term" value="P:L-ascorbic acid catabolic process"/>
    <property type="evidence" value="ECO:0007669"/>
    <property type="project" value="UniProtKB-UniRule"/>
</dbReference>
<dbReference type="GO" id="GO:0019852">
    <property type="term" value="P:L-ascorbic acid metabolic process"/>
    <property type="evidence" value="ECO:0000318"/>
    <property type="project" value="GO_Central"/>
</dbReference>
<dbReference type="FunFam" id="3.20.20.150:FF:000003">
    <property type="entry name" value="L-ribulose-5-phosphate 3-epimerase UlaE"/>
    <property type="match status" value="1"/>
</dbReference>
<dbReference type="Gene3D" id="3.20.20.150">
    <property type="entry name" value="Divalent-metal-dependent TIM barrel enzymes"/>
    <property type="match status" value="1"/>
</dbReference>
<dbReference type="HAMAP" id="MF_01951">
    <property type="entry name" value="UlaE"/>
    <property type="match status" value="1"/>
</dbReference>
<dbReference type="InterPro" id="IPR004560">
    <property type="entry name" value="L-Ru-5P_3-Epase"/>
</dbReference>
<dbReference type="InterPro" id="IPR023492">
    <property type="entry name" value="L-Ru-5P_3-Epase_Enterobacteria"/>
</dbReference>
<dbReference type="InterPro" id="IPR050417">
    <property type="entry name" value="Sugar_Epim/Isomerase"/>
</dbReference>
<dbReference type="InterPro" id="IPR036237">
    <property type="entry name" value="Xyl_isomerase-like_sf"/>
</dbReference>
<dbReference type="InterPro" id="IPR013022">
    <property type="entry name" value="Xyl_isomerase-like_TIM-brl"/>
</dbReference>
<dbReference type="NCBIfam" id="TIGR00542">
    <property type="entry name" value="hxl6Piso_put"/>
    <property type="match status" value="1"/>
</dbReference>
<dbReference type="NCBIfam" id="NF009688">
    <property type="entry name" value="PRK13209.1"/>
    <property type="match status" value="1"/>
</dbReference>
<dbReference type="NCBIfam" id="NF009689">
    <property type="entry name" value="PRK13210.1"/>
    <property type="match status" value="1"/>
</dbReference>
<dbReference type="PANTHER" id="PTHR43489">
    <property type="entry name" value="ISOMERASE"/>
    <property type="match status" value="1"/>
</dbReference>
<dbReference type="PANTHER" id="PTHR43489:SF8">
    <property type="entry name" value="L-RIBULOSE-5-PHOSPHATE 3-EPIMERASE ULAE"/>
    <property type="match status" value="1"/>
</dbReference>
<dbReference type="Pfam" id="PF01261">
    <property type="entry name" value="AP_endonuc_2"/>
    <property type="match status" value="1"/>
</dbReference>
<dbReference type="SUPFAM" id="SSF51658">
    <property type="entry name" value="Xylose isomerase-like"/>
    <property type="match status" value="1"/>
</dbReference>
<reference key="1">
    <citation type="journal article" date="2001" name="Nature">
        <title>Complete genome sequence of Salmonella enterica serovar Typhimurium LT2.</title>
        <authorList>
            <person name="McClelland M."/>
            <person name="Sanderson K.E."/>
            <person name="Spieth J."/>
            <person name="Clifton S.W."/>
            <person name="Latreille P."/>
            <person name="Courtney L."/>
            <person name="Porwollik S."/>
            <person name="Ali J."/>
            <person name="Dante M."/>
            <person name="Du F."/>
            <person name="Hou S."/>
            <person name="Layman D."/>
            <person name="Leonard S."/>
            <person name="Nguyen C."/>
            <person name="Scott K."/>
            <person name="Holmes A."/>
            <person name="Grewal N."/>
            <person name="Mulvaney E."/>
            <person name="Ryan E."/>
            <person name="Sun H."/>
            <person name="Florea L."/>
            <person name="Miller W."/>
            <person name="Stoneking T."/>
            <person name="Nhan M."/>
            <person name="Waterston R."/>
            <person name="Wilson R.K."/>
        </authorList>
    </citation>
    <scope>NUCLEOTIDE SEQUENCE [LARGE SCALE GENOMIC DNA]</scope>
    <source>
        <strain>LT2 / SGSC1412 / ATCC 700720</strain>
    </source>
</reference>
<name>ULAE_SALTY</name>
<comment type="function">
    <text evidence="1">Catalyzes the isomerization of L-xylulose-5-phosphate to L-ribulose-5-phosphate. Is involved in the anaerobic L-ascorbate utilization.</text>
</comment>
<comment type="catalytic activity">
    <reaction evidence="1">
        <text>L-ribulose 5-phosphate = L-xylulose 5-phosphate</text>
        <dbReference type="Rhea" id="RHEA:18497"/>
        <dbReference type="ChEBI" id="CHEBI:57829"/>
        <dbReference type="ChEBI" id="CHEBI:58226"/>
        <dbReference type="EC" id="5.1.3.22"/>
    </reaction>
</comment>
<comment type="pathway">
    <text evidence="1">Cofactor degradation; L-ascorbate degradation; D-xylulose 5-phosphate from L-ascorbate: step 3/4.</text>
</comment>
<comment type="induction">
    <text evidence="1">Induced by L-ascorbate. Repressed by UlaR.</text>
</comment>
<comment type="similarity">
    <text evidence="1">Belongs to the L-ribulose-5-phosphate 3-epimerase family.</text>
</comment>
<keyword id="KW-0413">Isomerase</keyword>
<keyword id="KW-1185">Reference proteome</keyword>
<sequence>MLSKQIPLGIYEKALPAGECWLERLRLAKTLGFDFVEMSVDETDARLARLDWSREQRLALVSAVAETGVRVPSMCLSAHRRFPLGSEDDAIRAQGLEIMRKAIQFAQDVGIRVIQLAGYDVYYQQANDETRCRFRDGLKESVDMASRAQVTLAMEIMDYPLMNSISKALGYAHYLNNPWFQLYPDIGNLSAWDNDVQMELQAGIGHIVAVHVKDTKPGVFKNVPFGEGVVDFERCFETLKQSGYCGPYLIEMWSETAENPAAEVAKARDWVKARMASAGLVEAA</sequence>
<feature type="chain" id="PRO_0000233256" description="L-ribulose-5-phosphate 3-epimerase UlaE">
    <location>
        <begin position="1"/>
        <end position="284"/>
    </location>
</feature>
<proteinExistence type="inferred from homology"/>